<accession>Q4P9X4</accession>
<accession>A0A0D1DZT9</accession>
<organism>
    <name type="scientific">Mycosarcoma maydis</name>
    <name type="common">Corn smut fungus</name>
    <name type="synonym">Ustilago maydis</name>
    <dbReference type="NCBI Taxonomy" id="5270"/>
    <lineage>
        <taxon>Eukaryota</taxon>
        <taxon>Fungi</taxon>
        <taxon>Dikarya</taxon>
        <taxon>Basidiomycota</taxon>
        <taxon>Ustilaginomycotina</taxon>
        <taxon>Ustilaginomycetes</taxon>
        <taxon>Ustilaginales</taxon>
        <taxon>Ustilaginaceae</taxon>
        <taxon>Mycosarcoma</taxon>
    </lineage>
</organism>
<reference key="1">
    <citation type="journal article" date="2006" name="Nature">
        <title>Insights from the genome of the biotrophic fungal plant pathogen Ustilago maydis.</title>
        <authorList>
            <person name="Kaemper J."/>
            <person name="Kahmann R."/>
            <person name="Boelker M."/>
            <person name="Ma L.-J."/>
            <person name="Brefort T."/>
            <person name="Saville B.J."/>
            <person name="Banuett F."/>
            <person name="Kronstad J.W."/>
            <person name="Gold S.E."/>
            <person name="Mueller O."/>
            <person name="Perlin M.H."/>
            <person name="Woesten H.A.B."/>
            <person name="de Vries R."/>
            <person name="Ruiz-Herrera J."/>
            <person name="Reynaga-Pena C.G."/>
            <person name="Snetselaar K."/>
            <person name="McCann M."/>
            <person name="Perez-Martin J."/>
            <person name="Feldbruegge M."/>
            <person name="Basse C.W."/>
            <person name="Steinberg G."/>
            <person name="Ibeas J.I."/>
            <person name="Holloman W."/>
            <person name="Guzman P."/>
            <person name="Farman M.L."/>
            <person name="Stajich J.E."/>
            <person name="Sentandreu R."/>
            <person name="Gonzalez-Prieto J.M."/>
            <person name="Kennell J.C."/>
            <person name="Molina L."/>
            <person name="Schirawski J."/>
            <person name="Mendoza-Mendoza A."/>
            <person name="Greilinger D."/>
            <person name="Muench K."/>
            <person name="Roessel N."/>
            <person name="Scherer M."/>
            <person name="Vranes M."/>
            <person name="Ladendorf O."/>
            <person name="Vincon V."/>
            <person name="Fuchs U."/>
            <person name="Sandrock B."/>
            <person name="Meng S."/>
            <person name="Ho E.C.H."/>
            <person name="Cahill M.J."/>
            <person name="Boyce K.J."/>
            <person name="Klose J."/>
            <person name="Klosterman S.J."/>
            <person name="Deelstra H.J."/>
            <person name="Ortiz-Castellanos L."/>
            <person name="Li W."/>
            <person name="Sanchez-Alonso P."/>
            <person name="Schreier P.H."/>
            <person name="Haeuser-Hahn I."/>
            <person name="Vaupel M."/>
            <person name="Koopmann E."/>
            <person name="Friedrich G."/>
            <person name="Voss H."/>
            <person name="Schlueter T."/>
            <person name="Margolis J."/>
            <person name="Platt D."/>
            <person name="Swimmer C."/>
            <person name="Gnirke A."/>
            <person name="Chen F."/>
            <person name="Vysotskaia V."/>
            <person name="Mannhaupt G."/>
            <person name="Gueldener U."/>
            <person name="Muensterkoetter M."/>
            <person name="Haase D."/>
            <person name="Oesterheld M."/>
            <person name="Mewes H.-W."/>
            <person name="Mauceli E.W."/>
            <person name="DeCaprio D."/>
            <person name="Wade C.M."/>
            <person name="Butler J."/>
            <person name="Young S.K."/>
            <person name="Jaffe D.B."/>
            <person name="Calvo S.E."/>
            <person name="Nusbaum C."/>
            <person name="Galagan J.E."/>
            <person name="Birren B.W."/>
        </authorList>
    </citation>
    <scope>NUCLEOTIDE SEQUENCE [LARGE SCALE GENOMIC DNA]</scope>
    <source>
        <strain>DSM 14603 / FGSC 9021 / UM521</strain>
    </source>
</reference>
<reference key="2">
    <citation type="submission" date="2014-09" db="EMBL/GenBank/DDBJ databases">
        <authorList>
            <person name="Gueldener U."/>
            <person name="Muensterkoetter M."/>
            <person name="Walter M.C."/>
            <person name="Mannhaupt G."/>
            <person name="Kahmann R."/>
        </authorList>
    </citation>
    <scope>GENOME REANNOTATION</scope>
    <source>
        <strain>DSM 14603 / FGSC 9021 / UM521</strain>
    </source>
</reference>
<proteinExistence type="inferred from homology"/>
<keyword id="KW-0507">mRNA processing</keyword>
<keyword id="KW-0508">mRNA splicing</keyword>
<keyword id="KW-0539">Nucleus</keyword>
<keyword id="KW-1185">Reference proteome</keyword>
<keyword id="KW-0747">Spliceosome</keyword>
<gene>
    <name type="primary">SPP2</name>
    <name type="ORF">UMAG_03089</name>
</gene>
<comment type="function">
    <text evidence="1">Involved in spliceosome maturation and the first step of pre-mRNA splicing.</text>
</comment>
<comment type="subunit">
    <text evidence="1">Associated with the spliceosome.</text>
</comment>
<comment type="subcellular location">
    <subcellularLocation>
        <location evidence="1">Nucleus</location>
    </subcellularLocation>
</comment>
<comment type="similarity">
    <text evidence="4">Belongs to the SPP2 family.</text>
</comment>
<sequence length="417" mass="45533">MAGSLRDRAHKPSTRPRAFDDSDDDDAGLLASSSSRHEEEIVSFGRDGAKGRGASPVSDAPRVIPVTSNLDWRQDRKERLGRASNLQALGPLVSMRRAGASAVPGLASSSSTNDDINIDAINTEAQKRGLKLRSSKVTRADDTPQQLSGDVFDEQTADASAVPKASADVAGEDAEAIKALLAGQGNDSAGTGGQLIIHQETESELLQHDIDSRPEAPTLDDYAATPIDQFGMALLRGMGWKEGMGAGKGGKGPQQAAEPRKRAALLGLGAKERPTGPLNLSKPSSSSGNLQPKDKRDYKYVPVSKSDPRDYSNGRSPSSDHQPREKRPSKSHSTDLPSSHDSRRGDRDDRHARHSRTSHRQRSRSPTRSGVHDRDRRHERRRDGRDPERRSHPSSRSDRDRRSECDRDERRSSGHRR</sequence>
<name>SPP2_MYCMD</name>
<evidence type="ECO:0000250" key="1"/>
<evidence type="ECO:0000255" key="2">
    <source>
        <dbReference type="PROSITE-ProRule" id="PRU00092"/>
    </source>
</evidence>
<evidence type="ECO:0000256" key="3">
    <source>
        <dbReference type="SAM" id="MobiDB-lite"/>
    </source>
</evidence>
<evidence type="ECO:0000305" key="4"/>
<dbReference type="EMBL" id="CM003146">
    <property type="protein sequence ID" value="KIS69111.1"/>
    <property type="molecule type" value="Genomic_DNA"/>
</dbReference>
<dbReference type="RefSeq" id="XP_011389448.1">
    <property type="nucleotide sequence ID" value="XM_011391146.1"/>
</dbReference>
<dbReference type="STRING" id="237631.Q4P9X4"/>
<dbReference type="EnsemblFungi" id="KIS69111">
    <property type="protein sequence ID" value="KIS69111"/>
    <property type="gene ID" value="UMAG_03089"/>
</dbReference>
<dbReference type="GeneID" id="23563658"/>
<dbReference type="KEGG" id="uma:UMAG_03089"/>
<dbReference type="VEuPathDB" id="FungiDB:UMAG_03089"/>
<dbReference type="eggNOG" id="ENOG502RZY8">
    <property type="taxonomic scope" value="Eukaryota"/>
</dbReference>
<dbReference type="HOGENOM" id="CLU_045413_1_0_1"/>
<dbReference type="InParanoid" id="Q4P9X4"/>
<dbReference type="OMA" id="AWGKSAM"/>
<dbReference type="OrthoDB" id="5577072at2759"/>
<dbReference type="Proteomes" id="UP000000561">
    <property type="component" value="Chromosome 7"/>
</dbReference>
<dbReference type="GO" id="GO:0005681">
    <property type="term" value="C:spliceosomal complex"/>
    <property type="evidence" value="ECO:0000318"/>
    <property type="project" value="GO_Central"/>
</dbReference>
<dbReference type="GO" id="GO:0003676">
    <property type="term" value="F:nucleic acid binding"/>
    <property type="evidence" value="ECO:0007669"/>
    <property type="project" value="InterPro"/>
</dbReference>
<dbReference type="GO" id="GO:0000398">
    <property type="term" value="P:mRNA splicing, via spliceosome"/>
    <property type="evidence" value="ECO:0000318"/>
    <property type="project" value="GO_Central"/>
</dbReference>
<dbReference type="InterPro" id="IPR000467">
    <property type="entry name" value="G_patch_dom"/>
</dbReference>
<dbReference type="InterPro" id="IPR045166">
    <property type="entry name" value="Spp2-like"/>
</dbReference>
<dbReference type="InterPro" id="IPR026822">
    <property type="entry name" value="Spp2/MOS2_G-patch"/>
</dbReference>
<dbReference type="PANTHER" id="PTHR15818">
    <property type="entry name" value="G PATCH AND KOW-CONTAINING"/>
    <property type="match status" value="1"/>
</dbReference>
<dbReference type="PANTHER" id="PTHR15818:SF2">
    <property type="entry name" value="G-PATCH DOMAIN AND KOW MOTIFS-CONTAINING PROTEIN"/>
    <property type="match status" value="1"/>
</dbReference>
<dbReference type="Pfam" id="PF12656">
    <property type="entry name" value="G-patch_2"/>
    <property type="match status" value="1"/>
</dbReference>
<dbReference type="SMART" id="SM00443">
    <property type="entry name" value="G_patch"/>
    <property type="match status" value="1"/>
</dbReference>
<dbReference type="PROSITE" id="PS50174">
    <property type="entry name" value="G_PATCH"/>
    <property type="match status" value="1"/>
</dbReference>
<feature type="chain" id="PRO_0000218528" description="Pre-mRNA-splicing factor SPP2">
    <location>
        <begin position="1"/>
        <end position="417"/>
    </location>
</feature>
<feature type="domain" description="G-patch" evidence="2">
    <location>
        <begin position="227"/>
        <end position="273"/>
    </location>
</feature>
<feature type="region of interest" description="Disordered" evidence="3">
    <location>
        <begin position="1"/>
        <end position="70"/>
    </location>
</feature>
<feature type="region of interest" description="Disordered" evidence="3">
    <location>
        <begin position="201"/>
        <end position="221"/>
    </location>
</feature>
<feature type="region of interest" description="Disordered" evidence="3">
    <location>
        <begin position="240"/>
        <end position="417"/>
    </location>
</feature>
<feature type="compositionally biased region" description="Basic and acidic residues" evidence="3">
    <location>
        <begin position="201"/>
        <end position="214"/>
    </location>
</feature>
<feature type="compositionally biased region" description="Gly residues" evidence="3">
    <location>
        <begin position="240"/>
        <end position="252"/>
    </location>
</feature>
<feature type="compositionally biased region" description="Polar residues" evidence="3">
    <location>
        <begin position="281"/>
        <end position="290"/>
    </location>
</feature>
<feature type="compositionally biased region" description="Basic and acidic residues" evidence="3">
    <location>
        <begin position="338"/>
        <end position="351"/>
    </location>
</feature>
<feature type="compositionally biased region" description="Basic residues" evidence="3">
    <location>
        <begin position="352"/>
        <end position="365"/>
    </location>
</feature>
<feature type="compositionally biased region" description="Basic and acidic residues" evidence="3">
    <location>
        <begin position="370"/>
        <end position="417"/>
    </location>
</feature>
<protein>
    <recommendedName>
        <fullName>Pre-mRNA-splicing factor SPP2</fullName>
    </recommendedName>
</protein>